<organism>
    <name type="scientific">Kluyveromyces lactis (strain ATCC 8585 / CBS 2359 / DSM 70799 / NBRC 1267 / NRRL Y-1140 / WM37)</name>
    <name type="common">Yeast</name>
    <name type="synonym">Candida sphaerica</name>
    <dbReference type="NCBI Taxonomy" id="284590"/>
    <lineage>
        <taxon>Eukaryota</taxon>
        <taxon>Fungi</taxon>
        <taxon>Dikarya</taxon>
        <taxon>Ascomycota</taxon>
        <taxon>Saccharomycotina</taxon>
        <taxon>Saccharomycetes</taxon>
        <taxon>Saccharomycetales</taxon>
        <taxon>Saccharomycetaceae</taxon>
        <taxon>Kluyveromyces</taxon>
    </lineage>
</organism>
<protein>
    <recommendedName>
        <fullName>Alcohol dehydrogenase 4, mitochondrial</fullName>
        <ecNumber>1.1.1.1</ecNumber>
    </recommendedName>
    <alternativeName>
        <fullName>Alcohol dehydrogenase IV</fullName>
    </alternativeName>
</protein>
<keyword id="KW-0479">Metal-binding</keyword>
<keyword id="KW-0496">Mitochondrion</keyword>
<keyword id="KW-0520">NAD</keyword>
<keyword id="KW-0560">Oxidoreductase</keyword>
<keyword id="KW-1185">Reference proteome</keyword>
<keyword id="KW-0809">Transit peptide</keyword>
<keyword id="KW-0862">Zinc</keyword>
<reference key="1">
    <citation type="journal article" date="1991" name="Yeast">
        <title>Two genes encoding putative mitochondrial alcohol dehydrogenases are present in the yeast Kluyveromyces lactis.</title>
        <authorList>
            <person name="Saliola M."/>
            <person name="Gonnella R."/>
            <person name="Mazzoni C."/>
            <person name="Falcone C."/>
        </authorList>
    </citation>
    <scope>NUCLEOTIDE SEQUENCE [GENOMIC DNA]</scope>
</reference>
<reference key="2">
    <citation type="journal article" date="2004" name="Nature">
        <title>Genome evolution in yeasts.</title>
        <authorList>
            <person name="Dujon B."/>
            <person name="Sherman D."/>
            <person name="Fischer G."/>
            <person name="Durrens P."/>
            <person name="Casaregola S."/>
            <person name="Lafontaine I."/>
            <person name="de Montigny J."/>
            <person name="Marck C."/>
            <person name="Neuveglise C."/>
            <person name="Talla E."/>
            <person name="Goffard N."/>
            <person name="Frangeul L."/>
            <person name="Aigle M."/>
            <person name="Anthouard V."/>
            <person name="Babour A."/>
            <person name="Barbe V."/>
            <person name="Barnay S."/>
            <person name="Blanchin S."/>
            <person name="Beckerich J.-M."/>
            <person name="Beyne E."/>
            <person name="Bleykasten C."/>
            <person name="Boisrame A."/>
            <person name="Boyer J."/>
            <person name="Cattolico L."/>
            <person name="Confanioleri F."/>
            <person name="de Daruvar A."/>
            <person name="Despons L."/>
            <person name="Fabre E."/>
            <person name="Fairhead C."/>
            <person name="Ferry-Dumazet H."/>
            <person name="Groppi A."/>
            <person name="Hantraye F."/>
            <person name="Hennequin C."/>
            <person name="Jauniaux N."/>
            <person name="Joyet P."/>
            <person name="Kachouri R."/>
            <person name="Kerrest A."/>
            <person name="Koszul R."/>
            <person name="Lemaire M."/>
            <person name="Lesur I."/>
            <person name="Ma L."/>
            <person name="Muller H."/>
            <person name="Nicaud J.-M."/>
            <person name="Nikolski M."/>
            <person name="Oztas S."/>
            <person name="Ozier-Kalogeropoulos O."/>
            <person name="Pellenz S."/>
            <person name="Potier S."/>
            <person name="Richard G.-F."/>
            <person name="Straub M.-L."/>
            <person name="Suleau A."/>
            <person name="Swennen D."/>
            <person name="Tekaia F."/>
            <person name="Wesolowski-Louvel M."/>
            <person name="Westhof E."/>
            <person name="Wirth B."/>
            <person name="Zeniou-Meyer M."/>
            <person name="Zivanovic Y."/>
            <person name="Bolotin-Fukuhara M."/>
            <person name="Thierry A."/>
            <person name="Bouchier C."/>
            <person name="Caudron B."/>
            <person name="Scarpelli C."/>
            <person name="Gaillardin C."/>
            <person name="Weissenbach J."/>
            <person name="Wincker P."/>
            <person name="Souciet J.-L."/>
        </authorList>
    </citation>
    <scope>NUCLEOTIDE SEQUENCE [LARGE SCALE GENOMIC DNA]</scope>
    <source>
        <strain>ATCC 8585 / CBS 2359 / DSM 70799 / NBRC 1267 / NRRL Y-1140 / WM37</strain>
    </source>
</reference>
<accession>P49385</accession>
<accession>Q6CK50</accession>
<dbReference type="EC" id="1.1.1.1"/>
<dbReference type="EMBL" id="X62767">
    <property type="protein sequence ID" value="CAA44614.1"/>
    <property type="molecule type" value="Genomic_DNA"/>
</dbReference>
<dbReference type="EMBL" id="CR382126">
    <property type="protein sequence ID" value="CAG98397.1"/>
    <property type="molecule type" value="Genomic_DNA"/>
</dbReference>
<dbReference type="PIR" id="S17253">
    <property type="entry name" value="S17253"/>
</dbReference>
<dbReference type="RefSeq" id="XP_455689.1">
    <property type="nucleotide sequence ID" value="XM_455689.1"/>
</dbReference>
<dbReference type="SMR" id="P49385"/>
<dbReference type="FunCoup" id="P49385">
    <property type="interactions" value="210"/>
</dbReference>
<dbReference type="STRING" id="284590.P49385"/>
<dbReference type="PaxDb" id="284590-P49385"/>
<dbReference type="KEGG" id="kla:KLLA0_F13530g"/>
<dbReference type="eggNOG" id="KOG0023">
    <property type="taxonomic scope" value="Eukaryota"/>
</dbReference>
<dbReference type="HOGENOM" id="CLU_026673_20_1_1"/>
<dbReference type="InParanoid" id="P49385"/>
<dbReference type="OMA" id="AWFYDAC"/>
<dbReference type="Proteomes" id="UP000000598">
    <property type="component" value="Chromosome F"/>
</dbReference>
<dbReference type="GO" id="GO:0005759">
    <property type="term" value="C:mitochondrial matrix"/>
    <property type="evidence" value="ECO:0007669"/>
    <property type="project" value="UniProtKB-SubCell"/>
</dbReference>
<dbReference type="GO" id="GO:0004022">
    <property type="term" value="F:alcohol dehydrogenase (NAD+) activity"/>
    <property type="evidence" value="ECO:0007669"/>
    <property type="project" value="UniProtKB-EC"/>
</dbReference>
<dbReference type="GO" id="GO:0008270">
    <property type="term" value="F:zinc ion binding"/>
    <property type="evidence" value="ECO:0007669"/>
    <property type="project" value="InterPro"/>
</dbReference>
<dbReference type="CDD" id="cd08297">
    <property type="entry name" value="CAD3"/>
    <property type="match status" value="1"/>
</dbReference>
<dbReference type="FunFam" id="3.40.50.720:FF:000039">
    <property type="entry name" value="Alcohol dehydrogenase AdhP"/>
    <property type="match status" value="1"/>
</dbReference>
<dbReference type="FunFam" id="3.90.180.10:FF:000002">
    <property type="entry name" value="Alcohol dehydrogenase AdhP"/>
    <property type="match status" value="1"/>
</dbReference>
<dbReference type="Gene3D" id="3.90.180.10">
    <property type="entry name" value="Medium-chain alcohol dehydrogenases, catalytic domain"/>
    <property type="match status" value="1"/>
</dbReference>
<dbReference type="Gene3D" id="3.40.50.720">
    <property type="entry name" value="NAD(P)-binding Rossmann-like Domain"/>
    <property type="match status" value="1"/>
</dbReference>
<dbReference type="InterPro" id="IPR013149">
    <property type="entry name" value="ADH-like_C"/>
</dbReference>
<dbReference type="InterPro" id="IPR013154">
    <property type="entry name" value="ADH-like_N"/>
</dbReference>
<dbReference type="InterPro" id="IPR002328">
    <property type="entry name" value="ADH_Zn_CS"/>
</dbReference>
<dbReference type="InterPro" id="IPR011032">
    <property type="entry name" value="GroES-like_sf"/>
</dbReference>
<dbReference type="InterPro" id="IPR036291">
    <property type="entry name" value="NAD(P)-bd_dom_sf"/>
</dbReference>
<dbReference type="InterPro" id="IPR020843">
    <property type="entry name" value="PKS_ER"/>
</dbReference>
<dbReference type="PANTHER" id="PTHR42940">
    <property type="entry name" value="ALCOHOL DEHYDROGENASE 1-RELATED"/>
    <property type="match status" value="1"/>
</dbReference>
<dbReference type="PANTHER" id="PTHR42940:SF3">
    <property type="entry name" value="ALCOHOL DEHYDROGENASE 1-RELATED"/>
    <property type="match status" value="1"/>
</dbReference>
<dbReference type="Pfam" id="PF08240">
    <property type="entry name" value="ADH_N"/>
    <property type="match status" value="1"/>
</dbReference>
<dbReference type="Pfam" id="PF00107">
    <property type="entry name" value="ADH_zinc_N"/>
    <property type="match status" value="1"/>
</dbReference>
<dbReference type="SMART" id="SM00829">
    <property type="entry name" value="PKS_ER"/>
    <property type="match status" value="1"/>
</dbReference>
<dbReference type="SUPFAM" id="SSF50129">
    <property type="entry name" value="GroES-like"/>
    <property type="match status" value="1"/>
</dbReference>
<dbReference type="SUPFAM" id="SSF51735">
    <property type="entry name" value="NAD(P)-binding Rossmann-fold domains"/>
    <property type="match status" value="1"/>
</dbReference>
<dbReference type="PROSITE" id="PS00059">
    <property type="entry name" value="ADH_ZINC"/>
    <property type="match status" value="1"/>
</dbReference>
<feature type="transit peptide" description="Mitochondrion" evidence="2">
    <location>
        <begin position="1"/>
        <end position="27"/>
    </location>
</feature>
<feature type="chain" id="PRO_0000000878" description="Alcohol dehydrogenase 4, mitochondrial">
    <location>
        <begin position="28"/>
        <end position="375"/>
    </location>
</feature>
<feature type="binding site" evidence="1">
    <location>
        <position position="71"/>
    </location>
    <ligand>
        <name>Zn(2+)</name>
        <dbReference type="ChEBI" id="CHEBI:29105"/>
        <label>1</label>
        <note>catalytic</note>
    </ligand>
</feature>
<feature type="binding site" evidence="1">
    <location>
        <position position="94"/>
    </location>
    <ligand>
        <name>Zn(2+)</name>
        <dbReference type="ChEBI" id="CHEBI:29105"/>
        <label>1</label>
        <note>catalytic</note>
    </ligand>
</feature>
<feature type="binding site" evidence="1">
    <location>
        <position position="125"/>
    </location>
    <ligand>
        <name>Zn(2+)</name>
        <dbReference type="ChEBI" id="CHEBI:29105"/>
        <label>2</label>
    </ligand>
</feature>
<feature type="binding site" evidence="1">
    <location>
        <position position="128"/>
    </location>
    <ligand>
        <name>Zn(2+)</name>
        <dbReference type="ChEBI" id="CHEBI:29105"/>
        <label>2</label>
    </ligand>
</feature>
<feature type="binding site" evidence="1">
    <location>
        <position position="131"/>
    </location>
    <ligand>
        <name>Zn(2+)</name>
        <dbReference type="ChEBI" id="CHEBI:29105"/>
        <label>2</label>
    </ligand>
</feature>
<feature type="binding site" evidence="1">
    <location>
        <position position="139"/>
    </location>
    <ligand>
        <name>Zn(2+)</name>
        <dbReference type="ChEBI" id="CHEBI:29105"/>
        <label>2</label>
    </ligand>
</feature>
<feature type="binding site" evidence="1">
    <location>
        <position position="181"/>
    </location>
    <ligand>
        <name>Zn(2+)</name>
        <dbReference type="ChEBI" id="CHEBI:29105"/>
        <label>1</label>
        <note>catalytic</note>
    </ligand>
</feature>
<feature type="binding site" evidence="1">
    <location>
        <begin position="205"/>
        <end position="211"/>
    </location>
    <ligand>
        <name>NAD(+)</name>
        <dbReference type="ChEBI" id="CHEBI:57540"/>
    </ligand>
</feature>
<feature type="binding site" evidence="1">
    <location>
        <position position="229"/>
    </location>
    <ligand>
        <name>NAD(+)</name>
        <dbReference type="ChEBI" id="CHEBI:57540"/>
    </ligand>
</feature>
<feature type="binding site" evidence="1">
    <location>
        <position position="234"/>
    </location>
    <ligand>
        <name>NAD(+)</name>
        <dbReference type="ChEBI" id="CHEBI:57540"/>
    </ligand>
</feature>
<feature type="binding site" evidence="1">
    <location>
        <begin position="296"/>
        <end position="298"/>
    </location>
    <ligand>
        <name>NAD(+)</name>
        <dbReference type="ChEBI" id="CHEBI:57540"/>
    </ligand>
</feature>
<feature type="binding site" evidence="1">
    <location>
        <position position="368"/>
    </location>
    <ligand>
        <name>NAD(+)</name>
        <dbReference type="ChEBI" id="CHEBI:57540"/>
    </ligand>
</feature>
<feature type="sequence conflict" description="In Ref. 1; CAA44614." evidence="3" ref="1">
    <original>A</original>
    <variation>R</variation>
    <location>
        <position position="157"/>
    </location>
</feature>
<feature type="sequence conflict" description="In Ref. 1; CAA44614." evidence="3" ref="1">
    <original>A</original>
    <variation>R</variation>
    <location>
        <position position="218"/>
    </location>
</feature>
<feature type="sequence conflict" description="In Ref. 1; CAA44614." evidence="3" ref="1">
    <original>I</original>
    <variation>V</variation>
    <location>
        <position position="280"/>
    </location>
</feature>
<feature type="sequence conflict" description="In Ref. 1; CAA44614." evidence="3" ref="1">
    <original>V</original>
    <variation>L</variation>
    <location>
        <position position="287"/>
    </location>
</feature>
<feature type="sequence conflict" description="In Ref. 1; CAA44614." evidence="3" ref="1">
    <original>V</original>
    <variation>L</variation>
    <location>
        <position position="292"/>
    </location>
</feature>
<feature type="sequence conflict" description="In Ref. 1; CAA44614." evidence="3" ref="1">
    <original>F</original>
    <variation>L</variation>
    <location>
        <position position="335"/>
    </location>
</feature>
<feature type="sequence conflict" description="In Ref. 1; CAA44614." evidence="3" ref="1">
    <original>E</original>
    <variation>A</variation>
    <location>
        <position position="358"/>
    </location>
</feature>
<sequence>MFRLARAQTALANKASVSRSFLRLNSSFAIPETQKGVIFYENGGKLEYKDLPVPKPKANEILINVKYSGVCHTDLHAWKGDWPLPVKLPLVGGHEGAGIVVAKGENVKNFEIGDYAGIKWLNGSCMSCELCEQGYESNCLQADLSGYTHDGSFQQYATADAVQAAQIPKGTDLAEIAPILCAGVTVYKALKTADLKPGQWVAISGAAGGLGSLAVQYAKAMGLRVLGIDGGDGKEELFKQCGGEVFIDFRKSKDMVADIQEATNGGPHGVINVSVSEAAISMSTEYVRPTGVVVLVGLPADAYVKSEVFSHVVKSISIKGSYVGNRADTREATDFFTRGLVKSPIKIIGLSELPEAYELMEQGKILGRFVVDTYK</sequence>
<proteinExistence type="inferred from homology"/>
<gene>
    <name type="primary">ADH4</name>
    <name type="ordered locus">KLLA0F13530g</name>
</gene>
<comment type="catalytic activity">
    <reaction>
        <text>a primary alcohol + NAD(+) = an aldehyde + NADH + H(+)</text>
        <dbReference type="Rhea" id="RHEA:10736"/>
        <dbReference type="ChEBI" id="CHEBI:15378"/>
        <dbReference type="ChEBI" id="CHEBI:15734"/>
        <dbReference type="ChEBI" id="CHEBI:17478"/>
        <dbReference type="ChEBI" id="CHEBI:57540"/>
        <dbReference type="ChEBI" id="CHEBI:57945"/>
        <dbReference type="EC" id="1.1.1.1"/>
    </reaction>
</comment>
<comment type="catalytic activity">
    <reaction>
        <text>a secondary alcohol + NAD(+) = a ketone + NADH + H(+)</text>
        <dbReference type="Rhea" id="RHEA:10740"/>
        <dbReference type="ChEBI" id="CHEBI:15378"/>
        <dbReference type="ChEBI" id="CHEBI:17087"/>
        <dbReference type="ChEBI" id="CHEBI:35681"/>
        <dbReference type="ChEBI" id="CHEBI:57540"/>
        <dbReference type="ChEBI" id="CHEBI:57945"/>
        <dbReference type="EC" id="1.1.1.1"/>
    </reaction>
</comment>
<comment type="cofactor">
    <cofactor evidence="1">
        <name>Zn(2+)</name>
        <dbReference type="ChEBI" id="CHEBI:29105"/>
    </cofactor>
    <text evidence="1">Binds 2 Zn(2+) ions per subunit.</text>
</comment>
<comment type="subunit">
    <text evidence="1">Homotetramer.</text>
</comment>
<comment type="subcellular location">
    <subcellularLocation>
        <location>Mitochondrion matrix</location>
    </subcellularLocation>
</comment>
<comment type="similarity">
    <text evidence="3">Belongs to the zinc-containing alcohol dehydrogenase family.</text>
</comment>
<name>ADH4_KLULA</name>
<evidence type="ECO:0000250" key="1"/>
<evidence type="ECO:0000255" key="2"/>
<evidence type="ECO:0000305" key="3"/>